<name>SUCC_STAHJ</name>
<reference key="1">
    <citation type="journal article" date="2005" name="J. Bacteriol.">
        <title>Whole-genome sequencing of Staphylococcus haemolyticus uncovers the extreme plasticity of its genome and the evolution of human-colonizing staphylococcal species.</title>
        <authorList>
            <person name="Takeuchi F."/>
            <person name="Watanabe S."/>
            <person name="Baba T."/>
            <person name="Yuzawa H."/>
            <person name="Ito T."/>
            <person name="Morimoto Y."/>
            <person name="Kuroda M."/>
            <person name="Cui L."/>
            <person name="Takahashi M."/>
            <person name="Ankai A."/>
            <person name="Baba S."/>
            <person name="Fukui S."/>
            <person name="Lee J.C."/>
            <person name="Hiramatsu K."/>
        </authorList>
    </citation>
    <scope>NUCLEOTIDE SEQUENCE [LARGE SCALE GENOMIC DNA]</scope>
    <source>
        <strain>JCSC1435</strain>
    </source>
</reference>
<comment type="function">
    <text evidence="1">Succinyl-CoA synthetase functions in the citric acid cycle (TCA), coupling the hydrolysis of succinyl-CoA to the synthesis of either ATP or GTP and thus represents the only step of substrate-level phosphorylation in the TCA. The beta subunit provides nucleotide specificity of the enzyme and binds the substrate succinate, while the binding sites for coenzyme A and phosphate are found in the alpha subunit.</text>
</comment>
<comment type="catalytic activity">
    <reaction evidence="1">
        <text>succinate + ATP + CoA = succinyl-CoA + ADP + phosphate</text>
        <dbReference type="Rhea" id="RHEA:17661"/>
        <dbReference type="ChEBI" id="CHEBI:30031"/>
        <dbReference type="ChEBI" id="CHEBI:30616"/>
        <dbReference type="ChEBI" id="CHEBI:43474"/>
        <dbReference type="ChEBI" id="CHEBI:57287"/>
        <dbReference type="ChEBI" id="CHEBI:57292"/>
        <dbReference type="ChEBI" id="CHEBI:456216"/>
        <dbReference type="EC" id="6.2.1.5"/>
    </reaction>
    <physiologicalReaction direction="right-to-left" evidence="1">
        <dbReference type="Rhea" id="RHEA:17663"/>
    </physiologicalReaction>
</comment>
<comment type="catalytic activity">
    <reaction evidence="1">
        <text>GTP + succinate + CoA = succinyl-CoA + GDP + phosphate</text>
        <dbReference type="Rhea" id="RHEA:22120"/>
        <dbReference type="ChEBI" id="CHEBI:30031"/>
        <dbReference type="ChEBI" id="CHEBI:37565"/>
        <dbReference type="ChEBI" id="CHEBI:43474"/>
        <dbReference type="ChEBI" id="CHEBI:57287"/>
        <dbReference type="ChEBI" id="CHEBI:57292"/>
        <dbReference type="ChEBI" id="CHEBI:58189"/>
    </reaction>
    <physiologicalReaction direction="right-to-left" evidence="1">
        <dbReference type="Rhea" id="RHEA:22122"/>
    </physiologicalReaction>
</comment>
<comment type="cofactor">
    <cofactor evidence="1">
        <name>Mg(2+)</name>
        <dbReference type="ChEBI" id="CHEBI:18420"/>
    </cofactor>
    <text evidence="1">Binds 1 Mg(2+) ion per subunit.</text>
</comment>
<comment type="pathway">
    <text evidence="1">Carbohydrate metabolism; tricarboxylic acid cycle; succinate from succinyl-CoA (ligase route): step 1/1.</text>
</comment>
<comment type="subunit">
    <text evidence="1">Heterotetramer of two alpha and two beta subunits.</text>
</comment>
<comment type="similarity">
    <text evidence="1">Belongs to the succinate/malate CoA ligase beta subunit family.</text>
</comment>
<evidence type="ECO:0000255" key="1">
    <source>
        <dbReference type="HAMAP-Rule" id="MF_00558"/>
    </source>
</evidence>
<gene>
    <name evidence="1" type="primary">sucC</name>
    <name type="ordered locus">SH1668</name>
</gene>
<feature type="chain" id="PRO_0000102867" description="Succinate--CoA ligase [ADP-forming] subunit beta">
    <location>
        <begin position="1"/>
        <end position="388"/>
    </location>
</feature>
<feature type="domain" description="ATP-grasp" evidence="1">
    <location>
        <begin position="9"/>
        <end position="244"/>
    </location>
</feature>
<feature type="binding site" evidence="1">
    <location>
        <position position="46"/>
    </location>
    <ligand>
        <name>ATP</name>
        <dbReference type="ChEBI" id="CHEBI:30616"/>
    </ligand>
</feature>
<feature type="binding site" evidence="1">
    <location>
        <begin position="53"/>
        <end position="55"/>
    </location>
    <ligand>
        <name>ATP</name>
        <dbReference type="ChEBI" id="CHEBI:30616"/>
    </ligand>
</feature>
<feature type="binding site" evidence="1">
    <location>
        <position position="99"/>
    </location>
    <ligand>
        <name>ATP</name>
        <dbReference type="ChEBI" id="CHEBI:30616"/>
    </ligand>
</feature>
<feature type="binding site" evidence="1">
    <location>
        <position position="102"/>
    </location>
    <ligand>
        <name>ATP</name>
        <dbReference type="ChEBI" id="CHEBI:30616"/>
    </ligand>
</feature>
<feature type="binding site" evidence="1">
    <location>
        <position position="107"/>
    </location>
    <ligand>
        <name>ATP</name>
        <dbReference type="ChEBI" id="CHEBI:30616"/>
    </ligand>
</feature>
<feature type="binding site" evidence="1">
    <location>
        <position position="199"/>
    </location>
    <ligand>
        <name>Mg(2+)</name>
        <dbReference type="ChEBI" id="CHEBI:18420"/>
    </ligand>
</feature>
<feature type="binding site" evidence="1">
    <location>
        <position position="213"/>
    </location>
    <ligand>
        <name>Mg(2+)</name>
        <dbReference type="ChEBI" id="CHEBI:18420"/>
    </ligand>
</feature>
<feature type="binding site" evidence="1">
    <location>
        <position position="264"/>
    </location>
    <ligand>
        <name>substrate</name>
        <note>ligand shared with subunit alpha</note>
    </ligand>
</feature>
<feature type="binding site" evidence="1">
    <location>
        <begin position="321"/>
        <end position="323"/>
    </location>
    <ligand>
        <name>substrate</name>
        <note>ligand shared with subunit alpha</note>
    </ligand>
</feature>
<organism>
    <name type="scientific">Staphylococcus haemolyticus (strain JCSC1435)</name>
    <dbReference type="NCBI Taxonomy" id="279808"/>
    <lineage>
        <taxon>Bacteria</taxon>
        <taxon>Bacillati</taxon>
        <taxon>Bacillota</taxon>
        <taxon>Bacilli</taxon>
        <taxon>Bacillales</taxon>
        <taxon>Staphylococcaceae</taxon>
        <taxon>Staphylococcus</taxon>
    </lineage>
</organism>
<dbReference type="EC" id="6.2.1.5" evidence="1"/>
<dbReference type="EMBL" id="AP006716">
    <property type="protein sequence ID" value="BAE04977.1"/>
    <property type="molecule type" value="Genomic_DNA"/>
</dbReference>
<dbReference type="RefSeq" id="WP_011275954.1">
    <property type="nucleotide sequence ID" value="NC_007168.1"/>
</dbReference>
<dbReference type="SMR" id="Q4L5U8"/>
<dbReference type="GeneID" id="93781046"/>
<dbReference type="KEGG" id="sha:SH1668"/>
<dbReference type="eggNOG" id="COG0045">
    <property type="taxonomic scope" value="Bacteria"/>
</dbReference>
<dbReference type="HOGENOM" id="CLU_037430_0_2_9"/>
<dbReference type="OrthoDB" id="9802602at2"/>
<dbReference type="UniPathway" id="UPA00223">
    <property type="reaction ID" value="UER00999"/>
</dbReference>
<dbReference type="Proteomes" id="UP000000543">
    <property type="component" value="Chromosome"/>
</dbReference>
<dbReference type="GO" id="GO:0005829">
    <property type="term" value="C:cytosol"/>
    <property type="evidence" value="ECO:0007669"/>
    <property type="project" value="TreeGrafter"/>
</dbReference>
<dbReference type="GO" id="GO:0042709">
    <property type="term" value="C:succinate-CoA ligase complex"/>
    <property type="evidence" value="ECO:0007669"/>
    <property type="project" value="TreeGrafter"/>
</dbReference>
<dbReference type="GO" id="GO:0005524">
    <property type="term" value="F:ATP binding"/>
    <property type="evidence" value="ECO:0007669"/>
    <property type="project" value="UniProtKB-UniRule"/>
</dbReference>
<dbReference type="GO" id="GO:0000287">
    <property type="term" value="F:magnesium ion binding"/>
    <property type="evidence" value="ECO:0007669"/>
    <property type="project" value="UniProtKB-UniRule"/>
</dbReference>
<dbReference type="GO" id="GO:0004775">
    <property type="term" value="F:succinate-CoA ligase (ADP-forming) activity"/>
    <property type="evidence" value="ECO:0007669"/>
    <property type="project" value="UniProtKB-UniRule"/>
</dbReference>
<dbReference type="GO" id="GO:0004776">
    <property type="term" value="F:succinate-CoA ligase (GDP-forming) activity"/>
    <property type="evidence" value="ECO:0007669"/>
    <property type="project" value="RHEA"/>
</dbReference>
<dbReference type="GO" id="GO:0006104">
    <property type="term" value="P:succinyl-CoA metabolic process"/>
    <property type="evidence" value="ECO:0007669"/>
    <property type="project" value="TreeGrafter"/>
</dbReference>
<dbReference type="GO" id="GO:0006099">
    <property type="term" value="P:tricarboxylic acid cycle"/>
    <property type="evidence" value="ECO:0007669"/>
    <property type="project" value="UniProtKB-UniRule"/>
</dbReference>
<dbReference type="FunFam" id="3.30.1490.20:FF:000002">
    <property type="entry name" value="Succinate--CoA ligase [ADP-forming] subunit beta"/>
    <property type="match status" value="1"/>
</dbReference>
<dbReference type="FunFam" id="3.30.470.20:FF:000002">
    <property type="entry name" value="Succinate--CoA ligase [ADP-forming] subunit beta"/>
    <property type="match status" value="1"/>
</dbReference>
<dbReference type="FunFam" id="3.40.50.261:FF:000001">
    <property type="entry name" value="Succinate--CoA ligase [ADP-forming] subunit beta"/>
    <property type="match status" value="1"/>
</dbReference>
<dbReference type="Gene3D" id="3.30.1490.20">
    <property type="entry name" value="ATP-grasp fold, A domain"/>
    <property type="match status" value="1"/>
</dbReference>
<dbReference type="Gene3D" id="3.30.470.20">
    <property type="entry name" value="ATP-grasp fold, B domain"/>
    <property type="match status" value="1"/>
</dbReference>
<dbReference type="Gene3D" id="3.40.50.261">
    <property type="entry name" value="Succinyl-CoA synthetase domains"/>
    <property type="match status" value="1"/>
</dbReference>
<dbReference type="HAMAP" id="MF_00558">
    <property type="entry name" value="Succ_CoA_beta"/>
    <property type="match status" value="1"/>
</dbReference>
<dbReference type="InterPro" id="IPR011761">
    <property type="entry name" value="ATP-grasp"/>
</dbReference>
<dbReference type="InterPro" id="IPR013650">
    <property type="entry name" value="ATP-grasp_succ-CoA_synth-type"/>
</dbReference>
<dbReference type="InterPro" id="IPR013815">
    <property type="entry name" value="ATP_grasp_subdomain_1"/>
</dbReference>
<dbReference type="InterPro" id="IPR017866">
    <property type="entry name" value="Succ-CoA_synthase_bsu_CS"/>
</dbReference>
<dbReference type="InterPro" id="IPR005811">
    <property type="entry name" value="SUCC_ACL_C"/>
</dbReference>
<dbReference type="InterPro" id="IPR005809">
    <property type="entry name" value="Succ_CoA_ligase-like_bsu"/>
</dbReference>
<dbReference type="InterPro" id="IPR016102">
    <property type="entry name" value="Succinyl-CoA_synth-like"/>
</dbReference>
<dbReference type="NCBIfam" id="NF001913">
    <property type="entry name" value="PRK00696.1"/>
    <property type="match status" value="1"/>
</dbReference>
<dbReference type="NCBIfam" id="TIGR01016">
    <property type="entry name" value="sucCoAbeta"/>
    <property type="match status" value="1"/>
</dbReference>
<dbReference type="PANTHER" id="PTHR11815:SF10">
    <property type="entry name" value="SUCCINATE--COA LIGASE [GDP-FORMING] SUBUNIT BETA, MITOCHONDRIAL"/>
    <property type="match status" value="1"/>
</dbReference>
<dbReference type="PANTHER" id="PTHR11815">
    <property type="entry name" value="SUCCINYL-COA SYNTHETASE BETA CHAIN"/>
    <property type="match status" value="1"/>
</dbReference>
<dbReference type="Pfam" id="PF08442">
    <property type="entry name" value="ATP-grasp_2"/>
    <property type="match status" value="1"/>
</dbReference>
<dbReference type="Pfam" id="PF00549">
    <property type="entry name" value="Ligase_CoA"/>
    <property type="match status" value="1"/>
</dbReference>
<dbReference type="PIRSF" id="PIRSF001554">
    <property type="entry name" value="SucCS_beta"/>
    <property type="match status" value="1"/>
</dbReference>
<dbReference type="SUPFAM" id="SSF56059">
    <property type="entry name" value="Glutathione synthetase ATP-binding domain-like"/>
    <property type="match status" value="1"/>
</dbReference>
<dbReference type="SUPFAM" id="SSF52210">
    <property type="entry name" value="Succinyl-CoA synthetase domains"/>
    <property type="match status" value="1"/>
</dbReference>
<dbReference type="PROSITE" id="PS50975">
    <property type="entry name" value="ATP_GRASP"/>
    <property type="match status" value="1"/>
</dbReference>
<dbReference type="PROSITE" id="PS01217">
    <property type="entry name" value="SUCCINYL_COA_LIG_3"/>
    <property type="match status" value="1"/>
</dbReference>
<protein>
    <recommendedName>
        <fullName evidence="1">Succinate--CoA ligase [ADP-forming] subunit beta</fullName>
        <ecNumber evidence="1">6.2.1.5</ecNumber>
    </recommendedName>
    <alternativeName>
        <fullName evidence="1">Succinyl-CoA synthetase subunit beta</fullName>
        <shortName evidence="1">SCS-beta</shortName>
    </alternativeName>
</protein>
<sequence length="388" mass="42254">MNIHEYQGKEIFRSMGVAVPEGRVAFTAEEAVEKAKELDTEIYVVKAQIHAGGRGKAGGVKIAKSLSEVETYANELLGKQLVTHQTGPEGKEVKRLYIEQGCDIQKEYYVGFVIDRATDRITLMASEEGGTEIEEVAAKTPEKIFKETIDPVVGLSPYQARRIAFNINIPKESINKAAKFLISLYNVFIEKDCSIVEINPLVTTGEGEVLALDAKINFDDNALFRHKDIQELRDLEEEDPKEIEASKYDLSYIALDGDIGCMVNGAGLAMATMDTINHFGGNPANFLDVGGGATKEKVTEAFKIILGDDNVKGIFVNIFGGIMKCDVIAEGIVAAVKEVELTLPLVVRLEGTNVERGKEILNESGLAIEPAATMAEGAQKIVKLVKEA</sequence>
<keyword id="KW-0067">ATP-binding</keyword>
<keyword id="KW-0436">Ligase</keyword>
<keyword id="KW-0460">Magnesium</keyword>
<keyword id="KW-0479">Metal-binding</keyword>
<keyword id="KW-0547">Nucleotide-binding</keyword>
<keyword id="KW-0816">Tricarboxylic acid cycle</keyword>
<accession>Q4L5U8</accession>
<proteinExistence type="inferred from homology"/>